<organismHost>
    <name type="scientific">Acidianus sp. F28</name>
    <dbReference type="NCBI Taxonomy" id="315458"/>
</organismHost>
<name>Y107_AFV2P</name>
<dbReference type="EMBL" id="AJ854042">
    <property type="protein sequence ID" value="CAH69411.1"/>
    <property type="molecule type" value="Genomic_DNA"/>
</dbReference>
<dbReference type="RefSeq" id="YP_001496949.1">
    <property type="nucleotide sequence ID" value="NC_009884.1"/>
</dbReference>
<dbReference type="SMR" id="Q573E5"/>
<dbReference type="KEGG" id="vg:5656089"/>
<dbReference type="Proteomes" id="UP000006364">
    <property type="component" value="Genome"/>
</dbReference>
<keyword id="KW-1185">Reference proteome</keyword>
<protein>
    <recommendedName>
        <fullName>Uncharacterized protein ORF107</fullName>
    </recommendedName>
</protein>
<reference key="1">
    <citation type="journal article" date="2005" name="J. Bacteriol.">
        <title>Structure and genome organization of AFV2, a novel archaeal lipothrixvirus with unusual terminal and core structures.</title>
        <authorList>
            <person name="Haring M."/>
            <person name="Vestergaard G."/>
            <person name="Brugger K."/>
            <person name="Rachel R."/>
            <person name="Garrett R.A."/>
            <person name="Prangishvili D."/>
        </authorList>
    </citation>
    <scope>NUCLEOTIDE SEQUENCE [GENOMIC DNA]</scope>
</reference>
<accession>Q573E5</accession>
<organism>
    <name type="scientific">Acidianus filamentous virus 2 (isolate Italy/Pozzuoli)</name>
    <name type="common">AFV-2</name>
    <dbReference type="NCBI Taxonomy" id="654910"/>
    <lineage>
        <taxon>Viruses</taxon>
        <taxon>Adnaviria</taxon>
        <taxon>Zilligvirae</taxon>
        <taxon>Taleaviricota</taxon>
        <taxon>Tokiviricetes</taxon>
        <taxon>Ligamenvirales</taxon>
        <taxon>Lipothrixviridae</taxon>
        <taxon>Deltalipothrixvirus</taxon>
        <taxon>Acidianus filamentous virus 2</taxon>
    </lineage>
</organism>
<gene>
    <name type="ORF">ORF107</name>
</gene>
<feature type="chain" id="PRO_0000384501" description="Uncharacterized protein ORF107">
    <location>
        <begin position="1"/>
        <end position="107"/>
    </location>
</feature>
<sequence length="107" mass="12008">MFRRGNNDEIKSTIRSIINPSGIIKYNVVYIPKYDAYRITLVSSTGNINASYIAEIISQLTAQGYAVMMKTPRSTLLRGGVVVLYAEKHHSNVGNDELPPPPLRKNW</sequence>
<proteinExistence type="predicted"/>